<gene>
    <name evidence="1" type="primary">pnp</name>
    <name type="synonym">pnpA</name>
    <name type="ordered locus">SAB1136</name>
</gene>
<organism>
    <name type="scientific">Staphylococcus aureus (strain bovine RF122 / ET3-1)</name>
    <dbReference type="NCBI Taxonomy" id="273036"/>
    <lineage>
        <taxon>Bacteria</taxon>
        <taxon>Bacillati</taxon>
        <taxon>Bacillota</taxon>
        <taxon>Bacilli</taxon>
        <taxon>Bacillales</taxon>
        <taxon>Staphylococcaceae</taxon>
        <taxon>Staphylococcus</taxon>
    </lineage>
</organism>
<protein>
    <recommendedName>
        <fullName evidence="1">Polyribonucleotide nucleotidyltransferase</fullName>
        <ecNumber evidence="1">2.7.7.8</ecNumber>
    </recommendedName>
    <alternativeName>
        <fullName evidence="1">Polynucleotide phosphorylase</fullName>
        <shortName evidence="1">PNPase</shortName>
    </alternativeName>
</protein>
<reference key="1">
    <citation type="journal article" date="2007" name="PLoS ONE">
        <title>Molecular correlates of host specialization in Staphylococcus aureus.</title>
        <authorList>
            <person name="Herron-Olson L."/>
            <person name="Fitzgerald J.R."/>
            <person name="Musser J.M."/>
            <person name="Kapur V."/>
        </authorList>
    </citation>
    <scope>NUCLEOTIDE SEQUENCE [LARGE SCALE GENOMIC DNA]</scope>
    <source>
        <strain>bovine RF122 / ET3-1</strain>
    </source>
</reference>
<name>PNP_STAAB</name>
<keyword id="KW-0963">Cytoplasm</keyword>
<keyword id="KW-0460">Magnesium</keyword>
<keyword id="KW-0479">Metal-binding</keyword>
<keyword id="KW-0548">Nucleotidyltransferase</keyword>
<keyword id="KW-0694">RNA-binding</keyword>
<keyword id="KW-0808">Transferase</keyword>
<comment type="function">
    <text evidence="1">Involved in mRNA degradation. Catalyzes the phosphorolysis of single-stranded polyribonucleotides processively in the 3'- to 5'-direction.</text>
</comment>
<comment type="catalytic activity">
    <reaction evidence="1">
        <text>RNA(n+1) + phosphate = RNA(n) + a ribonucleoside 5'-diphosphate</text>
        <dbReference type="Rhea" id="RHEA:22096"/>
        <dbReference type="Rhea" id="RHEA-COMP:14527"/>
        <dbReference type="Rhea" id="RHEA-COMP:17342"/>
        <dbReference type="ChEBI" id="CHEBI:43474"/>
        <dbReference type="ChEBI" id="CHEBI:57930"/>
        <dbReference type="ChEBI" id="CHEBI:140395"/>
        <dbReference type="EC" id="2.7.7.8"/>
    </reaction>
</comment>
<comment type="cofactor">
    <cofactor evidence="1">
        <name>Mg(2+)</name>
        <dbReference type="ChEBI" id="CHEBI:18420"/>
    </cofactor>
</comment>
<comment type="subcellular location">
    <subcellularLocation>
        <location evidence="1">Cytoplasm</location>
    </subcellularLocation>
</comment>
<comment type="similarity">
    <text evidence="1">Belongs to the polyribonucleotide nucleotidyltransferase family.</text>
</comment>
<proteinExistence type="inferred from homology"/>
<dbReference type="EC" id="2.7.7.8" evidence="1"/>
<dbReference type="EMBL" id="AJ938182">
    <property type="protein sequence ID" value="CAI80825.1"/>
    <property type="molecule type" value="Genomic_DNA"/>
</dbReference>
<dbReference type="RefSeq" id="WP_000076686.1">
    <property type="nucleotide sequence ID" value="NC_007622.1"/>
</dbReference>
<dbReference type="SMR" id="Q2YXP2"/>
<dbReference type="KEGG" id="sab:SAB1136"/>
<dbReference type="HOGENOM" id="CLU_004217_2_2_9"/>
<dbReference type="GO" id="GO:0005829">
    <property type="term" value="C:cytosol"/>
    <property type="evidence" value="ECO:0007669"/>
    <property type="project" value="TreeGrafter"/>
</dbReference>
<dbReference type="GO" id="GO:0000175">
    <property type="term" value="F:3'-5'-RNA exonuclease activity"/>
    <property type="evidence" value="ECO:0007669"/>
    <property type="project" value="TreeGrafter"/>
</dbReference>
<dbReference type="GO" id="GO:0000287">
    <property type="term" value="F:magnesium ion binding"/>
    <property type="evidence" value="ECO:0007669"/>
    <property type="project" value="UniProtKB-UniRule"/>
</dbReference>
<dbReference type="GO" id="GO:0004654">
    <property type="term" value="F:polyribonucleotide nucleotidyltransferase activity"/>
    <property type="evidence" value="ECO:0007669"/>
    <property type="project" value="UniProtKB-UniRule"/>
</dbReference>
<dbReference type="GO" id="GO:0003723">
    <property type="term" value="F:RNA binding"/>
    <property type="evidence" value="ECO:0007669"/>
    <property type="project" value="UniProtKB-UniRule"/>
</dbReference>
<dbReference type="GO" id="GO:0006402">
    <property type="term" value="P:mRNA catabolic process"/>
    <property type="evidence" value="ECO:0007669"/>
    <property type="project" value="UniProtKB-UniRule"/>
</dbReference>
<dbReference type="GO" id="GO:0006396">
    <property type="term" value="P:RNA processing"/>
    <property type="evidence" value="ECO:0007669"/>
    <property type="project" value="InterPro"/>
</dbReference>
<dbReference type="CDD" id="cd02393">
    <property type="entry name" value="KH-I_PNPase"/>
    <property type="match status" value="1"/>
</dbReference>
<dbReference type="CDD" id="cd11363">
    <property type="entry name" value="RNase_PH_PNPase_1"/>
    <property type="match status" value="1"/>
</dbReference>
<dbReference type="CDD" id="cd11364">
    <property type="entry name" value="RNase_PH_PNPase_2"/>
    <property type="match status" value="1"/>
</dbReference>
<dbReference type="CDD" id="cd04472">
    <property type="entry name" value="S1_PNPase"/>
    <property type="match status" value="1"/>
</dbReference>
<dbReference type="FunFam" id="2.40.50.140:FF:000023">
    <property type="entry name" value="Polyribonucleotide nucleotidyltransferase"/>
    <property type="match status" value="1"/>
</dbReference>
<dbReference type="FunFam" id="3.30.1370.10:FF:000001">
    <property type="entry name" value="Polyribonucleotide nucleotidyltransferase"/>
    <property type="match status" value="1"/>
</dbReference>
<dbReference type="FunFam" id="3.30.230.70:FF:000001">
    <property type="entry name" value="Polyribonucleotide nucleotidyltransferase"/>
    <property type="match status" value="1"/>
</dbReference>
<dbReference type="FunFam" id="3.30.230.70:FF:000002">
    <property type="entry name" value="Polyribonucleotide nucleotidyltransferase"/>
    <property type="match status" value="1"/>
</dbReference>
<dbReference type="Gene3D" id="3.30.230.70">
    <property type="entry name" value="GHMP Kinase, N-terminal domain"/>
    <property type="match status" value="2"/>
</dbReference>
<dbReference type="Gene3D" id="3.30.1370.10">
    <property type="entry name" value="K Homology domain, type 1"/>
    <property type="match status" value="1"/>
</dbReference>
<dbReference type="Gene3D" id="2.40.50.140">
    <property type="entry name" value="Nucleic acid-binding proteins"/>
    <property type="match status" value="1"/>
</dbReference>
<dbReference type="HAMAP" id="MF_01595">
    <property type="entry name" value="PNPase"/>
    <property type="match status" value="1"/>
</dbReference>
<dbReference type="InterPro" id="IPR001247">
    <property type="entry name" value="ExoRNase_PH_dom1"/>
</dbReference>
<dbReference type="InterPro" id="IPR015847">
    <property type="entry name" value="ExoRNase_PH_dom2"/>
</dbReference>
<dbReference type="InterPro" id="IPR036345">
    <property type="entry name" value="ExoRNase_PH_dom2_sf"/>
</dbReference>
<dbReference type="InterPro" id="IPR004087">
    <property type="entry name" value="KH_dom"/>
</dbReference>
<dbReference type="InterPro" id="IPR004088">
    <property type="entry name" value="KH_dom_type_1"/>
</dbReference>
<dbReference type="InterPro" id="IPR036612">
    <property type="entry name" value="KH_dom_type_1_sf"/>
</dbReference>
<dbReference type="InterPro" id="IPR012340">
    <property type="entry name" value="NA-bd_OB-fold"/>
</dbReference>
<dbReference type="InterPro" id="IPR012162">
    <property type="entry name" value="PNPase"/>
</dbReference>
<dbReference type="InterPro" id="IPR027408">
    <property type="entry name" value="PNPase/RNase_PH_dom_sf"/>
</dbReference>
<dbReference type="InterPro" id="IPR015848">
    <property type="entry name" value="PNPase_PH_RNA-bd_bac/org-type"/>
</dbReference>
<dbReference type="InterPro" id="IPR036456">
    <property type="entry name" value="PNPase_PH_RNA-bd_sf"/>
</dbReference>
<dbReference type="InterPro" id="IPR020568">
    <property type="entry name" value="Ribosomal_Su5_D2-typ_SF"/>
</dbReference>
<dbReference type="InterPro" id="IPR003029">
    <property type="entry name" value="S1_domain"/>
</dbReference>
<dbReference type="NCBIfam" id="TIGR03591">
    <property type="entry name" value="polynuc_phos"/>
    <property type="match status" value="1"/>
</dbReference>
<dbReference type="NCBIfam" id="NF008805">
    <property type="entry name" value="PRK11824.1"/>
    <property type="match status" value="1"/>
</dbReference>
<dbReference type="PANTHER" id="PTHR11252">
    <property type="entry name" value="POLYRIBONUCLEOTIDE NUCLEOTIDYLTRANSFERASE"/>
    <property type="match status" value="1"/>
</dbReference>
<dbReference type="PANTHER" id="PTHR11252:SF0">
    <property type="entry name" value="POLYRIBONUCLEOTIDE NUCLEOTIDYLTRANSFERASE 1, MITOCHONDRIAL"/>
    <property type="match status" value="1"/>
</dbReference>
<dbReference type="Pfam" id="PF00013">
    <property type="entry name" value="KH_1"/>
    <property type="match status" value="1"/>
</dbReference>
<dbReference type="Pfam" id="PF03726">
    <property type="entry name" value="PNPase"/>
    <property type="match status" value="1"/>
</dbReference>
<dbReference type="Pfam" id="PF01138">
    <property type="entry name" value="RNase_PH"/>
    <property type="match status" value="2"/>
</dbReference>
<dbReference type="Pfam" id="PF03725">
    <property type="entry name" value="RNase_PH_C"/>
    <property type="match status" value="2"/>
</dbReference>
<dbReference type="Pfam" id="PF00575">
    <property type="entry name" value="S1"/>
    <property type="match status" value="1"/>
</dbReference>
<dbReference type="PIRSF" id="PIRSF005499">
    <property type="entry name" value="PNPase"/>
    <property type="match status" value="1"/>
</dbReference>
<dbReference type="SMART" id="SM00322">
    <property type="entry name" value="KH"/>
    <property type="match status" value="1"/>
</dbReference>
<dbReference type="SMART" id="SM00316">
    <property type="entry name" value="S1"/>
    <property type="match status" value="1"/>
</dbReference>
<dbReference type="SUPFAM" id="SSF54791">
    <property type="entry name" value="Eukaryotic type KH-domain (KH-domain type I)"/>
    <property type="match status" value="1"/>
</dbReference>
<dbReference type="SUPFAM" id="SSF50249">
    <property type="entry name" value="Nucleic acid-binding proteins"/>
    <property type="match status" value="1"/>
</dbReference>
<dbReference type="SUPFAM" id="SSF46915">
    <property type="entry name" value="Polynucleotide phosphorylase/guanosine pentaphosphate synthase (PNPase/GPSI), domain 3"/>
    <property type="match status" value="1"/>
</dbReference>
<dbReference type="SUPFAM" id="SSF55666">
    <property type="entry name" value="Ribonuclease PH domain 2-like"/>
    <property type="match status" value="2"/>
</dbReference>
<dbReference type="SUPFAM" id="SSF54211">
    <property type="entry name" value="Ribosomal protein S5 domain 2-like"/>
    <property type="match status" value="2"/>
</dbReference>
<dbReference type="PROSITE" id="PS50084">
    <property type="entry name" value="KH_TYPE_1"/>
    <property type="match status" value="1"/>
</dbReference>
<dbReference type="PROSITE" id="PS50126">
    <property type="entry name" value="S1"/>
    <property type="match status" value="1"/>
</dbReference>
<accession>Q2YXP2</accession>
<feature type="chain" id="PRO_0000260053" description="Polyribonucleotide nucleotidyltransferase">
    <location>
        <begin position="1"/>
        <end position="698"/>
    </location>
</feature>
<feature type="domain" description="KH" evidence="1">
    <location>
        <begin position="557"/>
        <end position="616"/>
    </location>
</feature>
<feature type="domain" description="S1 motif" evidence="1">
    <location>
        <begin position="626"/>
        <end position="694"/>
    </location>
</feature>
<feature type="binding site" evidence="1">
    <location>
        <position position="490"/>
    </location>
    <ligand>
        <name>Mg(2+)</name>
        <dbReference type="ChEBI" id="CHEBI:18420"/>
    </ligand>
</feature>
<feature type="binding site" evidence="1">
    <location>
        <position position="496"/>
    </location>
    <ligand>
        <name>Mg(2+)</name>
        <dbReference type="ChEBI" id="CHEBI:18420"/>
    </ligand>
</feature>
<evidence type="ECO:0000255" key="1">
    <source>
        <dbReference type="HAMAP-Rule" id="MF_01595"/>
    </source>
</evidence>
<sequence length="698" mass="77407">MSQEKKVFKTEWAGRSLTIETGQLAKQANGAVLVRYGDTVVLSTATASKEPRDGDFFPLTVNYEEKMYAAGKIPGGFKKREGRPGDDATLTARLIDRPIRPLFPKGYKHDVQIMNMVLSADPDCSPQMAAMIGSSMALSVSDIPFQGPIAGVNVGYIDGKYIINPTVEEKEVSRLDLEVAGHKDAVNMVEAGASEITEQEMLEAIFFGHEEIQRLVDFQQQIVDHIQPVKQEFIPAERDEALVERIKSLTEEKGLKETVLTFDKQQRDENLDNLKEEIVNEFIDEEDPENELLIKEVYAILNELVKEEVRRLIADEKIRPDGRKPDEIRQLDSEVGILPRTHGSGLFTRGQTQALSVLTLGALGDYQLIDGLGPEEEKRFMHHYNFPNFSVGETGPVRAPGRREIGHGALGERALKYIIPDTADFPYTIRIVSEVLESNGSSSQASICGSTLALMDAGVPIKAPVAGIAMGLVTREDSYTILTDIQGMEDALGDMDFKVAGTKEGITAIQMDIKIDGLTREIIEEALEQARRGRLEIMNHMLQTIDQPRTELSAYAPKVVTMTIKPDKIRDVIGPGGKKINEIIDETGVKLDIEQDGTIFIGAVDQAMINRAREIIEEITREAEVGQTYQATVKRIEKYGAFVGLFPGKDALLHISQISKNRIEKVEDVLKIGDTIEVKITEIDKQGRVNASHRALEE</sequence>